<reference key="1">
    <citation type="journal article" date="2006" name="Proc. Natl. Acad. Sci. U.S.A.">
        <title>Evolution of sensory complexity recorded in a myxobacterial genome.</title>
        <authorList>
            <person name="Goldman B.S."/>
            <person name="Nierman W.C."/>
            <person name="Kaiser D."/>
            <person name="Slater S.C."/>
            <person name="Durkin A.S."/>
            <person name="Eisen J.A."/>
            <person name="Ronning C.M."/>
            <person name="Barbazuk W.B."/>
            <person name="Blanchard M."/>
            <person name="Field C."/>
            <person name="Halling C."/>
            <person name="Hinkle G."/>
            <person name="Iartchuk O."/>
            <person name="Kim H.S."/>
            <person name="Mackenzie C."/>
            <person name="Madupu R."/>
            <person name="Miller N."/>
            <person name="Shvartsbeyn A."/>
            <person name="Sullivan S.A."/>
            <person name="Vaudin M."/>
            <person name="Wiegand R."/>
            <person name="Kaplan H.B."/>
        </authorList>
    </citation>
    <scope>NUCLEOTIDE SEQUENCE [LARGE SCALE GENOMIC DNA]</scope>
    <source>
        <strain>DK1622</strain>
    </source>
</reference>
<keyword id="KW-0001">2Fe-2S</keyword>
<keyword id="KW-0004">4Fe-4S</keyword>
<keyword id="KW-0093">Biotin biosynthesis</keyword>
<keyword id="KW-0408">Iron</keyword>
<keyword id="KW-0411">Iron-sulfur</keyword>
<keyword id="KW-0479">Metal-binding</keyword>
<keyword id="KW-1185">Reference proteome</keyword>
<keyword id="KW-0949">S-adenosyl-L-methionine</keyword>
<keyword id="KW-0808">Transferase</keyword>
<sequence>MPDTATVSSESEFSGHAHVAAPPPAGVDVRHDWSLSEVRALYELPLLDLVHKAQTVHRAVFVDNKVQLCSLLSIKTGGCPEDCSYCPQAARYKTGVKAEKLMAVPDVLDAASKARAAGATRFCMGAAWREVKDGPQFDSVLEMVRGVRALGMEACATLGMLSESQAKRLREAGLSAYNHNLDTSPEHYGDIISTRTYEDRLRTLNRVRDAGISVCCGGIIGMGESVDDRCNLLRTLANQEHHPESVPINALVAVEGTPLQEQQRVETVDMVRTIATARILMPQSMVRLSAGRQQMNEEAQLLCMMAGANSLFFGEKLLTTGNPEYTQDMALLEKAGIRPLEPRQEG</sequence>
<dbReference type="EC" id="2.8.1.6" evidence="1"/>
<dbReference type="EMBL" id="CP000113">
    <property type="protein sequence ID" value="ABF89507.1"/>
    <property type="molecule type" value="Genomic_DNA"/>
</dbReference>
<dbReference type="RefSeq" id="WP_011551374.1">
    <property type="nucleotide sequence ID" value="NC_008095.1"/>
</dbReference>
<dbReference type="SMR" id="Q1DCV9"/>
<dbReference type="STRING" id="246197.MXAN_1257"/>
<dbReference type="EnsemblBacteria" id="ABF89507">
    <property type="protein sequence ID" value="ABF89507"/>
    <property type="gene ID" value="MXAN_1257"/>
</dbReference>
<dbReference type="GeneID" id="41358703"/>
<dbReference type="KEGG" id="mxa:MXAN_1257"/>
<dbReference type="eggNOG" id="COG0502">
    <property type="taxonomic scope" value="Bacteria"/>
</dbReference>
<dbReference type="HOGENOM" id="CLU_033172_1_2_7"/>
<dbReference type="OrthoDB" id="9786826at2"/>
<dbReference type="UniPathway" id="UPA00078">
    <property type="reaction ID" value="UER00162"/>
</dbReference>
<dbReference type="Proteomes" id="UP000002402">
    <property type="component" value="Chromosome"/>
</dbReference>
<dbReference type="GO" id="GO:0051537">
    <property type="term" value="F:2 iron, 2 sulfur cluster binding"/>
    <property type="evidence" value="ECO:0007669"/>
    <property type="project" value="UniProtKB-KW"/>
</dbReference>
<dbReference type="GO" id="GO:0051539">
    <property type="term" value="F:4 iron, 4 sulfur cluster binding"/>
    <property type="evidence" value="ECO:0007669"/>
    <property type="project" value="UniProtKB-KW"/>
</dbReference>
<dbReference type="GO" id="GO:0004076">
    <property type="term" value="F:biotin synthase activity"/>
    <property type="evidence" value="ECO:0007669"/>
    <property type="project" value="UniProtKB-UniRule"/>
</dbReference>
<dbReference type="GO" id="GO:0005506">
    <property type="term" value="F:iron ion binding"/>
    <property type="evidence" value="ECO:0007669"/>
    <property type="project" value="UniProtKB-UniRule"/>
</dbReference>
<dbReference type="GO" id="GO:0009102">
    <property type="term" value="P:biotin biosynthetic process"/>
    <property type="evidence" value="ECO:0007669"/>
    <property type="project" value="UniProtKB-UniRule"/>
</dbReference>
<dbReference type="CDD" id="cd01335">
    <property type="entry name" value="Radical_SAM"/>
    <property type="match status" value="1"/>
</dbReference>
<dbReference type="FunFam" id="3.20.20.70:FF:000011">
    <property type="entry name" value="Biotin synthase"/>
    <property type="match status" value="1"/>
</dbReference>
<dbReference type="Gene3D" id="3.20.20.70">
    <property type="entry name" value="Aldolase class I"/>
    <property type="match status" value="1"/>
</dbReference>
<dbReference type="HAMAP" id="MF_01694">
    <property type="entry name" value="BioB"/>
    <property type="match status" value="1"/>
</dbReference>
<dbReference type="InterPro" id="IPR013785">
    <property type="entry name" value="Aldolase_TIM"/>
</dbReference>
<dbReference type="InterPro" id="IPR010722">
    <property type="entry name" value="BATS_dom"/>
</dbReference>
<dbReference type="InterPro" id="IPR002684">
    <property type="entry name" value="Biotin_synth/BioAB"/>
</dbReference>
<dbReference type="InterPro" id="IPR024177">
    <property type="entry name" value="Biotin_synthase"/>
</dbReference>
<dbReference type="InterPro" id="IPR006638">
    <property type="entry name" value="Elp3/MiaA/NifB-like_rSAM"/>
</dbReference>
<dbReference type="InterPro" id="IPR007197">
    <property type="entry name" value="rSAM"/>
</dbReference>
<dbReference type="NCBIfam" id="TIGR00433">
    <property type="entry name" value="bioB"/>
    <property type="match status" value="1"/>
</dbReference>
<dbReference type="PANTHER" id="PTHR22976">
    <property type="entry name" value="BIOTIN SYNTHASE"/>
    <property type="match status" value="1"/>
</dbReference>
<dbReference type="PANTHER" id="PTHR22976:SF2">
    <property type="entry name" value="BIOTIN SYNTHASE, MITOCHONDRIAL"/>
    <property type="match status" value="1"/>
</dbReference>
<dbReference type="Pfam" id="PF06968">
    <property type="entry name" value="BATS"/>
    <property type="match status" value="1"/>
</dbReference>
<dbReference type="Pfam" id="PF04055">
    <property type="entry name" value="Radical_SAM"/>
    <property type="match status" value="1"/>
</dbReference>
<dbReference type="PIRSF" id="PIRSF001619">
    <property type="entry name" value="Biotin_synth"/>
    <property type="match status" value="1"/>
</dbReference>
<dbReference type="SFLD" id="SFLDF00272">
    <property type="entry name" value="biotin_synthase"/>
    <property type="match status" value="1"/>
</dbReference>
<dbReference type="SFLD" id="SFLDG01278">
    <property type="entry name" value="biotin_synthase_like"/>
    <property type="match status" value="1"/>
</dbReference>
<dbReference type="SMART" id="SM00876">
    <property type="entry name" value="BATS"/>
    <property type="match status" value="1"/>
</dbReference>
<dbReference type="SMART" id="SM00729">
    <property type="entry name" value="Elp3"/>
    <property type="match status" value="1"/>
</dbReference>
<dbReference type="SUPFAM" id="SSF102114">
    <property type="entry name" value="Radical SAM enzymes"/>
    <property type="match status" value="1"/>
</dbReference>
<dbReference type="PROSITE" id="PS51918">
    <property type="entry name" value="RADICAL_SAM"/>
    <property type="match status" value="1"/>
</dbReference>
<proteinExistence type="inferred from homology"/>
<name>BIOB_MYXXD</name>
<organism>
    <name type="scientific">Myxococcus xanthus (strain DK1622)</name>
    <dbReference type="NCBI Taxonomy" id="246197"/>
    <lineage>
        <taxon>Bacteria</taxon>
        <taxon>Pseudomonadati</taxon>
        <taxon>Myxococcota</taxon>
        <taxon>Myxococcia</taxon>
        <taxon>Myxococcales</taxon>
        <taxon>Cystobacterineae</taxon>
        <taxon>Myxococcaceae</taxon>
        <taxon>Myxococcus</taxon>
    </lineage>
</organism>
<evidence type="ECO:0000255" key="1">
    <source>
        <dbReference type="HAMAP-Rule" id="MF_01694"/>
    </source>
</evidence>
<evidence type="ECO:0000255" key="2">
    <source>
        <dbReference type="PROSITE-ProRule" id="PRU01266"/>
    </source>
</evidence>
<evidence type="ECO:0000256" key="3">
    <source>
        <dbReference type="SAM" id="MobiDB-lite"/>
    </source>
</evidence>
<protein>
    <recommendedName>
        <fullName evidence="1">Biotin synthase</fullName>
        <ecNumber evidence="1">2.8.1.6</ecNumber>
    </recommendedName>
</protein>
<gene>
    <name evidence="1" type="primary">bioB</name>
    <name type="ordered locus">MXAN_1257</name>
</gene>
<accession>Q1DCV9</accession>
<comment type="function">
    <text evidence="1">Catalyzes the conversion of dethiobiotin (DTB) to biotin by the insertion of a sulfur atom into dethiobiotin via a radical-based mechanism.</text>
</comment>
<comment type="catalytic activity">
    <reaction evidence="1">
        <text>(4R,5S)-dethiobiotin + (sulfur carrier)-SH + 2 reduced [2Fe-2S]-[ferredoxin] + 2 S-adenosyl-L-methionine = (sulfur carrier)-H + biotin + 2 5'-deoxyadenosine + 2 L-methionine + 2 oxidized [2Fe-2S]-[ferredoxin]</text>
        <dbReference type="Rhea" id="RHEA:22060"/>
        <dbReference type="Rhea" id="RHEA-COMP:10000"/>
        <dbReference type="Rhea" id="RHEA-COMP:10001"/>
        <dbReference type="Rhea" id="RHEA-COMP:14737"/>
        <dbReference type="Rhea" id="RHEA-COMP:14739"/>
        <dbReference type="ChEBI" id="CHEBI:17319"/>
        <dbReference type="ChEBI" id="CHEBI:29917"/>
        <dbReference type="ChEBI" id="CHEBI:33737"/>
        <dbReference type="ChEBI" id="CHEBI:33738"/>
        <dbReference type="ChEBI" id="CHEBI:57586"/>
        <dbReference type="ChEBI" id="CHEBI:57844"/>
        <dbReference type="ChEBI" id="CHEBI:59789"/>
        <dbReference type="ChEBI" id="CHEBI:64428"/>
        <dbReference type="ChEBI" id="CHEBI:149473"/>
        <dbReference type="EC" id="2.8.1.6"/>
    </reaction>
</comment>
<comment type="cofactor">
    <cofactor evidence="1">
        <name>[4Fe-4S] cluster</name>
        <dbReference type="ChEBI" id="CHEBI:49883"/>
    </cofactor>
    <text evidence="1">Binds 1 [4Fe-4S] cluster. The cluster is coordinated with 3 cysteines and an exchangeable S-adenosyl-L-methionine.</text>
</comment>
<comment type="cofactor">
    <cofactor evidence="1">
        <name>[2Fe-2S] cluster</name>
        <dbReference type="ChEBI" id="CHEBI:190135"/>
    </cofactor>
    <text evidence="1">Binds 1 [2Fe-2S] cluster. The cluster is coordinated with 3 cysteines and 1 arginine.</text>
</comment>
<comment type="pathway">
    <text evidence="1">Cofactor biosynthesis; biotin biosynthesis; biotin from 7,8-diaminononanoate: step 2/2.</text>
</comment>
<comment type="subunit">
    <text evidence="1">Homodimer.</text>
</comment>
<comment type="similarity">
    <text evidence="1">Belongs to the radical SAM superfamily. Biotin synthase family.</text>
</comment>
<feature type="chain" id="PRO_0000381490" description="Biotin synthase">
    <location>
        <begin position="1"/>
        <end position="346"/>
    </location>
</feature>
<feature type="domain" description="Radical SAM core" evidence="2">
    <location>
        <begin position="64"/>
        <end position="292"/>
    </location>
</feature>
<feature type="region of interest" description="Disordered" evidence="3">
    <location>
        <begin position="1"/>
        <end position="21"/>
    </location>
</feature>
<feature type="compositionally biased region" description="Polar residues" evidence="3">
    <location>
        <begin position="1"/>
        <end position="12"/>
    </location>
</feature>
<feature type="binding site" evidence="1">
    <location>
        <position position="79"/>
    </location>
    <ligand>
        <name>[4Fe-4S] cluster</name>
        <dbReference type="ChEBI" id="CHEBI:49883"/>
        <note>4Fe-4S-S-AdoMet</note>
    </ligand>
</feature>
<feature type="binding site" evidence="1">
    <location>
        <position position="83"/>
    </location>
    <ligand>
        <name>[4Fe-4S] cluster</name>
        <dbReference type="ChEBI" id="CHEBI:49883"/>
        <note>4Fe-4S-S-AdoMet</note>
    </ligand>
</feature>
<feature type="binding site" evidence="1">
    <location>
        <position position="86"/>
    </location>
    <ligand>
        <name>[4Fe-4S] cluster</name>
        <dbReference type="ChEBI" id="CHEBI:49883"/>
        <note>4Fe-4S-S-AdoMet</note>
    </ligand>
</feature>
<feature type="binding site" evidence="1">
    <location>
        <position position="123"/>
    </location>
    <ligand>
        <name>[2Fe-2S] cluster</name>
        <dbReference type="ChEBI" id="CHEBI:190135"/>
    </ligand>
</feature>
<feature type="binding site" evidence="1">
    <location>
        <position position="155"/>
    </location>
    <ligand>
        <name>[2Fe-2S] cluster</name>
        <dbReference type="ChEBI" id="CHEBI:190135"/>
    </ligand>
</feature>
<feature type="binding site" evidence="1">
    <location>
        <position position="215"/>
    </location>
    <ligand>
        <name>[2Fe-2S] cluster</name>
        <dbReference type="ChEBI" id="CHEBI:190135"/>
    </ligand>
</feature>
<feature type="binding site" evidence="1">
    <location>
        <position position="287"/>
    </location>
    <ligand>
        <name>[2Fe-2S] cluster</name>
        <dbReference type="ChEBI" id="CHEBI:190135"/>
    </ligand>
</feature>